<proteinExistence type="inferred from homology"/>
<sequence length="442" mass="53509">MNFFMEKNKDAGHRVTIKIPKTTVNNSLLQEFIKIRKTTKINGFRKGKTPIRVIQEKYGSAIYYDIFKKLMQKFFYEFIKTEKIKIIGSPKFYIHQDEDKKKEYFEYSVIYELYPQFQIKDIKQIKVNKINVEITEEDIKKNIETNKNKKNIWNPVNKAVKSYDRVTINYCIYEKNKKIKKFDKDNISFIVSKNTLIPQLNYKIINHFVNDIIFFKIKFHAFHPEKELQNKDITFKIKIIKIEKKQELESEKSNKKNITEKKTIQTDYQTIKNNLHSQINIITDKYLENQIIQKIVEKNILLLPPLLFQKEIKNLYKQYTKQYQEENSNILEKKYHMSLDSEVKKRLYFQIIIEQIILNNKLFADENNIQKLIKKISSNYKNPMEIIKLYNKNKNLKNTMKNIELERQAMLLLKKSIKIEKQNWNFERFLNYNWASHEELML</sequence>
<name>TIG_BUCA5</name>
<comment type="function">
    <text evidence="1">Involved in protein export. Acts as a chaperone by maintaining the newly synthesized protein in an open conformation. Functions as a peptidyl-prolyl cis-trans isomerase.</text>
</comment>
<comment type="catalytic activity">
    <reaction evidence="1">
        <text>[protein]-peptidylproline (omega=180) = [protein]-peptidylproline (omega=0)</text>
        <dbReference type="Rhea" id="RHEA:16237"/>
        <dbReference type="Rhea" id="RHEA-COMP:10747"/>
        <dbReference type="Rhea" id="RHEA-COMP:10748"/>
        <dbReference type="ChEBI" id="CHEBI:83833"/>
        <dbReference type="ChEBI" id="CHEBI:83834"/>
        <dbReference type="EC" id="5.2.1.8"/>
    </reaction>
</comment>
<comment type="subcellular location">
    <subcellularLocation>
        <location>Cytoplasm</location>
    </subcellularLocation>
    <text evidence="1">About half TF is bound to the ribosome near the polypeptide exit tunnel while the other half is free in the cytoplasm.</text>
</comment>
<comment type="domain">
    <text evidence="1">Consists of 3 domains; the N-terminus binds the ribosome, the middle domain has PPIase activity, while the C-terminus has intrinsic chaperone activity on its own.</text>
</comment>
<comment type="similarity">
    <text evidence="1">Belongs to the FKBP-type PPIase family. Tig subfamily.</text>
</comment>
<evidence type="ECO:0000255" key="1">
    <source>
        <dbReference type="HAMAP-Rule" id="MF_00303"/>
    </source>
</evidence>
<protein>
    <recommendedName>
        <fullName evidence="1">Trigger factor</fullName>
        <shortName evidence="1">TF</shortName>
        <ecNumber evidence="1">5.2.1.8</ecNumber>
    </recommendedName>
    <alternativeName>
        <fullName evidence="1">PPIase</fullName>
    </alternativeName>
</protein>
<gene>
    <name evidence="1" type="primary">tig</name>
    <name type="ordered locus">BUAP5A_467</name>
</gene>
<feature type="chain" id="PRO_1000198147" description="Trigger factor">
    <location>
        <begin position="1"/>
        <end position="442"/>
    </location>
</feature>
<feature type="domain" description="PPIase FKBP-type" evidence="1">
    <location>
        <begin position="163"/>
        <end position="248"/>
    </location>
</feature>
<accession>B8D9Q1</accession>
<reference key="1">
    <citation type="journal article" date="2009" name="Science">
        <title>The dynamics and time scale of ongoing genomic erosion in symbiotic bacteria.</title>
        <authorList>
            <person name="Moran N.A."/>
            <person name="McLaughlin H.J."/>
            <person name="Sorek R."/>
        </authorList>
    </citation>
    <scope>NUCLEOTIDE SEQUENCE [LARGE SCALE GENOMIC DNA]</scope>
    <source>
        <strain>5A</strain>
    </source>
</reference>
<keyword id="KW-0131">Cell cycle</keyword>
<keyword id="KW-0132">Cell division</keyword>
<keyword id="KW-0143">Chaperone</keyword>
<keyword id="KW-0963">Cytoplasm</keyword>
<keyword id="KW-0413">Isomerase</keyword>
<keyword id="KW-0697">Rotamase</keyword>
<organism>
    <name type="scientific">Buchnera aphidicola subsp. Acyrthosiphon pisum (strain 5A)</name>
    <dbReference type="NCBI Taxonomy" id="563178"/>
    <lineage>
        <taxon>Bacteria</taxon>
        <taxon>Pseudomonadati</taxon>
        <taxon>Pseudomonadota</taxon>
        <taxon>Gammaproteobacteria</taxon>
        <taxon>Enterobacterales</taxon>
        <taxon>Erwiniaceae</taxon>
        <taxon>Buchnera</taxon>
    </lineage>
</organism>
<dbReference type="EC" id="5.2.1.8" evidence="1"/>
<dbReference type="EMBL" id="CP001161">
    <property type="protein sequence ID" value="ACL30822.1"/>
    <property type="molecule type" value="Genomic_DNA"/>
</dbReference>
<dbReference type="RefSeq" id="WP_009874426.1">
    <property type="nucleotide sequence ID" value="NC_011833.1"/>
</dbReference>
<dbReference type="SMR" id="B8D9Q1"/>
<dbReference type="KEGG" id="bap:BUAP5A_467"/>
<dbReference type="HOGENOM" id="CLU_033058_2_0_6"/>
<dbReference type="OrthoDB" id="9767721at2"/>
<dbReference type="Proteomes" id="UP000006904">
    <property type="component" value="Chromosome"/>
</dbReference>
<dbReference type="GO" id="GO:0005737">
    <property type="term" value="C:cytoplasm"/>
    <property type="evidence" value="ECO:0007669"/>
    <property type="project" value="UniProtKB-SubCell"/>
</dbReference>
<dbReference type="GO" id="GO:0003755">
    <property type="term" value="F:peptidyl-prolyl cis-trans isomerase activity"/>
    <property type="evidence" value="ECO:0007669"/>
    <property type="project" value="UniProtKB-UniRule"/>
</dbReference>
<dbReference type="GO" id="GO:0051301">
    <property type="term" value="P:cell division"/>
    <property type="evidence" value="ECO:0007669"/>
    <property type="project" value="UniProtKB-KW"/>
</dbReference>
<dbReference type="GO" id="GO:0006457">
    <property type="term" value="P:protein folding"/>
    <property type="evidence" value="ECO:0007669"/>
    <property type="project" value="UniProtKB-UniRule"/>
</dbReference>
<dbReference type="GO" id="GO:0015031">
    <property type="term" value="P:protein transport"/>
    <property type="evidence" value="ECO:0007669"/>
    <property type="project" value="UniProtKB-UniRule"/>
</dbReference>
<dbReference type="Gene3D" id="3.10.50.40">
    <property type="match status" value="1"/>
</dbReference>
<dbReference type="Gene3D" id="3.30.70.1050">
    <property type="entry name" value="Trigger factor ribosome-binding domain"/>
    <property type="match status" value="1"/>
</dbReference>
<dbReference type="Gene3D" id="1.10.3120.10">
    <property type="entry name" value="Trigger factor, C-terminal domain"/>
    <property type="match status" value="1"/>
</dbReference>
<dbReference type="HAMAP" id="MF_00303">
    <property type="entry name" value="Trigger_factor_Tig"/>
    <property type="match status" value="1"/>
</dbReference>
<dbReference type="InterPro" id="IPR046357">
    <property type="entry name" value="PPIase_dom_sf"/>
</dbReference>
<dbReference type="InterPro" id="IPR005215">
    <property type="entry name" value="Trig_fac"/>
</dbReference>
<dbReference type="InterPro" id="IPR008880">
    <property type="entry name" value="Trigger_fac_C"/>
</dbReference>
<dbReference type="InterPro" id="IPR037041">
    <property type="entry name" value="Trigger_fac_C_sf"/>
</dbReference>
<dbReference type="InterPro" id="IPR008881">
    <property type="entry name" value="Trigger_fac_ribosome-bd_bac"/>
</dbReference>
<dbReference type="InterPro" id="IPR036611">
    <property type="entry name" value="Trigger_fac_ribosome-bd_sf"/>
</dbReference>
<dbReference type="InterPro" id="IPR027304">
    <property type="entry name" value="Trigger_fact/SurA_dom_sf"/>
</dbReference>
<dbReference type="NCBIfam" id="TIGR00115">
    <property type="entry name" value="tig"/>
    <property type="match status" value="1"/>
</dbReference>
<dbReference type="Pfam" id="PF05698">
    <property type="entry name" value="Trigger_C"/>
    <property type="match status" value="1"/>
</dbReference>
<dbReference type="Pfam" id="PF05697">
    <property type="entry name" value="Trigger_N"/>
    <property type="match status" value="1"/>
</dbReference>
<dbReference type="PIRSF" id="PIRSF003095">
    <property type="entry name" value="Trigger_factor"/>
    <property type="match status" value="1"/>
</dbReference>
<dbReference type="SUPFAM" id="SSF54534">
    <property type="entry name" value="FKBP-like"/>
    <property type="match status" value="1"/>
</dbReference>
<dbReference type="SUPFAM" id="SSF109998">
    <property type="entry name" value="Triger factor/SurA peptide-binding domain-like"/>
    <property type="match status" value="1"/>
</dbReference>
<dbReference type="SUPFAM" id="SSF102735">
    <property type="entry name" value="Trigger factor ribosome-binding domain"/>
    <property type="match status" value="1"/>
</dbReference>